<name>MPH1_ASPFU</name>
<gene>
    <name evidence="1" type="primary">mph1</name>
    <name type="ORF">AFUA_1G03050</name>
</gene>
<keyword id="KW-0067">ATP-binding</keyword>
<keyword id="KW-0227">DNA damage</keyword>
<keyword id="KW-0234">DNA repair</keyword>
<keyword id="KW-0238">DNA-binding</keyword>
<keyword id="KW-0347">Helicase</keyword>
<keyword id="KW-0378">Hydrolase</keyword>
<keyword id="KW-0547">Nucleotide-binding</keyword>
<keyword id="KW-0539">Nucleus</keyword>
<keyword id="KW-1185">Reference proteome</keyword>
<evidence type="ECO:0000250" key="1">
    <source>
        <dbReference type="UniProtKB" id="P40562"/>
    </source>
</evidence>
<evidence type="ECO:0000250" key="2">
    <source>
        <dbReference type="UniProtKB" id="Q9UT23"/>
    </source>
</evidence>
<evidence type="ECO:0000255" key="3">
    <source>
        <dbReference type="PROSITE-ProRule" id="PRU00541"/>
    </source>
</evidence>
<evidence type="ECO:0000255" key="4">
    <source>
        <dbReference type="PROSITE-ProRule" id="PRU00542"/>
    </source>
</evidence>
<evidence type="ECO:0000256" key="5">
    <source>
        <dbReference type="SAM" id="MobiDB-lite"/>
    </source>
</evidence>
<evidence type="ECO:0000305" key="6"/>
<organism>
    <name type="scientific">Aspergillus fumigatus (strain ATCC MYA-4609 / CBS 101355 / FGSC A1100 / Af293)</name>
    <name type="common">Neosartorya fumigata</name>
    <dbReference type="NCBI Taxonomy" id="330879"/>
    <lineage>
        <taxon>Eukaryota</taxon>
        <taxon>Fungi</taxon>
        <taxon>Dikarya</taxon>
        <taxon>Ascomycota</taxon>
        <taxon>Pezizomycotina</taxon>
        <taxon>Eurotiomycetes</taxon>
        <taxon>Eurotiomycetidae</taxon>
        <taxon>Eurotiales</taxon>
        <taxon>Aspergillaceae</taxon>
        <taxon>Aspergillus</taxon>
        <taxon>Aspergillus subgen. Fumigati</taxon>
    </lineage>
</organism>
<accession>Q4WKB5</accession>
<protein>
    <recommendedName>
        <fullName evidence="1">ATP-dependent DNA helicase mph1</fullName>
        <ecNumber evidence="1 2">3.6.4.12</ecNumber>
    </recommendedName>
    <alternativeName>
        <fullName evidence="2">FANCM-like protein 1</fullName>
    </alternativeName>
</protein>
<proteinExistence type="inferred from homology"/>
<reference key="1">
    <citation type="journal article" date="2005" name="Nature">
        <title>Genomic sequence of the pathogenic and allergenic filamentous fungus Aspergillus fumigatus.</title>
        <authorList>
            <person name="Nierman W.C."/>
            <person name="Pain A."/>
            <person name="Anderson M.J."/>
            <person name="Wortman J.R."/>
            <person name="Kim H.S."/>
            <person name="Arroyo J."/>
            <person name="Berriman M."/>
            <person name="Abe K."/>
            <person name="Archer D.B."/>
            <person name="Bermejo C."/>
            <person name="Bennett J.W."/>
            <person name="Bowyer P."/>
            <person name="Chen D."/>
            <person name="Collins M."/>
            <person name="Coulsen R."/>
            <person name="Davies R."/>
            <person name="Dyer P.S."/>
            <person name="Farman M.L."/>
            <person name="Fedorova N."/>
            <person name="Fedorova N.D."/>
            <person name="Feldblyum T.V."/>
            <person name="Fischer R."/>
            <person name="Fosker N."/>
            <person name="Fraser A."/>
            <person name="Garcia J.L."/>
            <person name="Garcia M.J."/>
            <person name="Goble A."/>
            <person name="Goldman G.H."/>
            <person name="Gomi K."/>
            <person name="Griffith-Jones S."/>
            <person name="Gwilliam R."/>
            <person name="Haas B.J."/>
            <person name="Haas H."/>
            <person name="Harris D.E."/>
            <person name="Horiuchi H."/>
            <person name="Huang J."/>
            <person name="Humphray S."/>
            <person name="Jimenez J."/>
            <person name="Keller N."/>
            <person name="Khouri H."/>
            <person name="Kitamoto K."/>
            <person name="Kobayashi T."/>
            <person name="Konzack S."/>
            <person name="Kulkarni R."/>
            <person name="Kumagai T."/>
            <person name="Lafton A."/>
            <person name="Latge J.-P."/>
            <person name="Li W."/>
            <person name="Lord A."/>
            <person name="Lu C."/>
            <person name="Majoros W.H."/>
            <person name="May G.S."/>
            <person name="Miller B.L."/>
            <person name="Mohamoud Y."/>
            <person name="Molina M."/>
            <person name="Monod M."/>
            <person name="Mouyna I."/>
            <person name="Mulligan S."/>
            <person name="Murphy L.D."/>
            <person name="O'Neil S."/>
            <person name="Paulsen I."/>
            <person name="Penalva M.A."/>
            <person name="Pertea M."/>
            <person name="Price C."/>
            <person name="Pritchard B.L."/>
            <person name="Quail M.A."/>
            <person name="Rabbinowitsch E."/>
            <person name="Rawlins N."/>
            <person name="Rajandream M.A."/>
            <person name="Reichard U."/>
            <person name="Renauld H."/>
            <person name="Robson G.D."/>
            <person name="Rodriguez de Cordoba S."/>
            <person name="Rodriguez-Pena J.M."/>
            <person name="Ronning C.M."/>
            <person name="Rutter S."/>
            <person name="Salzberg S.L."/>
            <person name="Sanchez M."/>
            <person name="Sanchez-Ferrero J.C."/>
            <person name="Saunders D."/>
            <person name="Seeger K."/>
            <person name="Squares R."/>
            <person name="Squares S."/>
            <person name="Takeuchi M."/>
            <person name="Tekaia F."/>
            <person name="Turner G."/>
            <person name="Vazquez de Aldana C.R."/>
            <person name="Weidman J."/>
            <person name="White O."/>
            <person name="Woodward J.R."/>
            <person name="Yu J.-H."/>
            <person name="Fraser C.M."/>
            <person name="Galagan J.E."/>
            <person name="Asai K."/>
            <person name="Machida M."/>
            <person name="Hall N."/>
            <person name="Barrell B.G."/>
            <person name="Denning D.W."/>
        </authorList>
    </citation>
    <scope>NUCLEOTIDE SEQUENCE [LARGE SCALE GENOMIC DNA]</scope>
    <source>
        <strain>ATCC MYA-4609 / CBS 101355 / FGSC A1100 / Af293</strain>
    </source>
</reference>
<comment type="function">
    <text evidence="2">ATP-dependent DNA helicase involved in DNA damage repair by homologous recombination and in genome maintenance. Capable of unwinding D-loops. Plays a role in limiting crossover recombinants during mitotic DNA double-strand break (DSB) repair. Component of a FANCM-MHF complex which promotes gene conversion at blocked replication forks, probably by reversal of the stalled fork.</text>
</comment>
<comment type="catalytic activity">
    <reaction evidence="2">
        <text>ATP + H2O = ADP + phosphate + H(+)</text>
        <dbReference type="Rhea" id="RHEA:13065"/>
        <dbReference type="ChEBI" id="CHEBI:15377"/>
        <dbReference type="ChEBI" id="CHEBI:15378"/>
        <dbReference type="ChEBI" id="CHEBI:30616"/>
        <dbReference type="ChEBI" id="CHEBI:43474"/>
        <dbReference type="ChEBI" id="CHEBI:456216"/>
        <dbReference type="EC" id="3.6.4.12"/>
    </reaction>
</comment>
<comment type="subunit">
    <text evidence="2">Interacts with the MHF histone-fold complex to form the FANCM-MHF complex.</text>
</comment>
<comment type="subcellular location">
    <subcellularLocation>
        <location evidence="1">Nucleus</location>
    </subcellularLocation>
</comment>
<comment type="similarity">
    <text evidence="6">Belongs to the DEAD box helicase family. DEAH subfamily. FANCM sub-subfamily.</text>
</comment>
<sequence>MSVSGDDFDDYFDDEIDDVIVPGTSDTVESVQTNNRPAKQSDISISQGNEEDEFQSPDRLSGNAVQFEDVERTSKYNVFIPKCKNVQENIFVTQLTQPPSPPEMIRGPRWKKPGPEPLAPEPATTRVGANHQSDQYHDEDKEMEAAIAASLRSFEEENGGDVPSTASGSTPARTAAAPCAAPKGTAADVPFDLDDIPDDAFDSDLSLSPPRSTSQATRGPPVQSQFRTNRPLGLRQSTLFDMAARNPDISSQRGEQIFSPPEKSEPPTHHKLNEEALNTWVYPTNLGKTRDYQFNIAQRGLFHNLLVALPTGLGKTFIAATIMLNWYRWTKSAQIIFVAPTKPLVAQQISACFQVAGIPRSETTMLTGEAAPGIRAEEWKSKRVFFMTPQTLVNDLKSGIADPKRIVLLVVDEAHRATGGYAYVEVVKFLKRYNKSFRVLALTATPGSTVESVQAIIDDLGIAKVEIRTEQSLDIREYVHARDTEVQTFQNSDEMVLCMELFTRTLQPLVDQLRNLNAYWGRDPMALTAFGLTKARQQWMGSDAGRNANLALKGKVNAIFTVLASLAHAIDLLKYHGITPFYRHLLHFQSNTDGQKGGKYQRQIVQDESFKKLMNHLQPWTKNPDFIGHPKLEYLKQVVLNHFMDRGEGTAANGDQSQSATRIMIFVHFRDSAEEVVRVLKRHEPLIRPHVFVGQSSAKGSEGMDQKTQLSIVQKFKKGTYNTIVATSIGEEGLDIGEVDLIVCYDSSASPIRMLQRMGRTGRKRAGNIVLLLMQGKEEESYIKAKDNYEKMQQMIASGTRFTFHDDKSPRILPPGVRPVAEKRQIDIPVENTQADLPEPRRRARPPKRPPKKFHMPDDVETGFAKASSLTGKVTKKAETKRAVRKPTPEPVEVPALEEVLLTPRQQQDLERRYCHIAGTSPEFIRNPRVDAYPRLQSVPRPTKAVKHGSLTSRMIGTLQKMGKVSVDCESRYRKVLALDSSKEIVDSVLSRDPWPPAKNSGRLGEKTHAFKRPSATPRPNNVHVREDENEDNCTPELVSPEKLMSSFLEPHTERPPYSSQRSQDAFELDFPDVETLLNRSAERHVSRKRNRFVLDDDSDE</sequence>
<dbReference type="EC" id="3.6.4.12" evidence="1 2"/>
<dbReference type="EMBL" id="AAHF01000007">
    <property type="protein sequence ID" value="EAL88017.1"/>
    <property type="molecule type" value="Genomic_DNA"/>
</dbReference>
<dbReference type="RefSeq" id="XP_750055.1">
    <property type="nucleotide sequence ID" value="XM_744962.1"/>
</dbReference>
<dbReference type="SMR" id="Q4WKB5"/>
<dbReference type="FunCoup" id="Q4WKB5">
    <property type="interactions" value="191"/>
</dbReference>
<dbReference type="STRING" id="330879.Q4WKB5"/>
<dbReference type="EnsemblFungi" id="EAL88017">
    <property type="protein sequence ID" value="EAL88017"/>
    <property type="gene ID" value="AFUA_1G03050"/>
</dbReference>
<dbReference type="GeneID" id="3507860"/>
<dbReference type="KEGG" id="afm:AFUA_1G03050"/>
<dbReference type="VEuPathDB" id="FungiDB:Afu1g03050"/>
<dbReference type="eggNOG" id="KOG0354">
    <property type="taxonomic scope" value="Eukaryota"/>
</dbReference>
<dbReference type="HOGENOM" id="CLU_002513_0_0_1"/>
<dbReference type="InParanoid" id="Q4WKB5"/>
<dbReference type="OMA" id="FMMRAIF"/>
<dbReference type="OrthoDB" id="164902at2759"/>
<dbReference type="Proteomes" id="UP000002530">
    <property type="component" value="Chromosome 1"/>
</dbReference>
<dbReference type="GO" id="GO:0005737">
    <property type="term" value="C:cytoplasm"/>
    <property type="evidence" value="ECO:0000318"/>
    <property type="project" value="GO_Central"/>
</dbReference>
<dbReference type="GO" id="GO:0005634">
    <property type="term" value="C:nucleus"/>
    <property type="evidence" value="ECO:0007669"/>
    <property type="project" value="UniProtKB-SubCell"/>
</dbReference>
<dbReference type="GO" id="GO:0043138">
    <property type="term" value="F:3'-5' DNA helicase activity"/>
    <property type="evidence" value="ECO:0007669"/>
    <property type="project" value="InterPro"/>
</dbReference>
<dbReference type="GO" id="GO:0005524">
    <property type="term" value="F:ATP binding"/>
    <property type="evidence" value="ECO:0007669"/>
    <property type="project" value="UniProtKB-KW"/>
</dbReference>
<dbReference type="GO" id="GO:0016887">
    <property type="term" value="F:ATP hydrolysis activity"/>
    <property type="evidence" value="ECO:0007669"/>
    <property type="project" value="RHEA"/>
</dbReference>
<dbReference type="GO" id="GO:0003677">
    <property type="term" value="F:DNA binding"/>
    <property type="evidence" value="ECO:0007669"/>
    <property type="project" value="UniProtKB-KW"/>
</dbReference>
<dbReference type="GO" id="GO:0006281">
    <property type="term" value="P:DNA repair"/>
    <property type="evidence" value="ECO:0007669"/>
    <property type="project" value="UniProtKB-KW"/>
</dbReference>
<dbReference type="CDD" id="cd18033">
    <property type="entry name" value="DEXDc_FANCM"/>
    <property type="match status" value="1"/>
</dbReference>
<dbReference type="CDD" id="cd12091">
    <property type="entry name" value="FANCM_ID"/>
    <property type="match status" value="1"/>
</dbReference>
<dbReference type="CDD" id="cd18801">
    <property type="entry name" value="SF2_C_FANCM_Hef"/>
    <property type="match status" value="1"/>
</dbReference>
<dbReference type="FunFam" id="3.40.50.300:FF:000861">
    <property type="entry name" value="Fanconi anemia, complementation group M"/>
    <property type="match status" value="1"/>
</dbReference>
<dbReference type="Gene3D" id="1.20.1320.20">
    <property type="entry name" value="hef helicase domain"/>
    <property type="match status" value="1"/>
</dbReference>
<dbReference type="Gene3D" id="3.40.50.300">
    <property type="entry name" value="P-loop containing nucleotide triphosphate hydrolases"/>
    <property type="match status" value="2"/>
</dbReference>
<dbReference type="InterPro" id="IPR039686">
    <property type="entry name" value="FANCM/Mph1-like_ID"/>
</dbReference>
<dbReference type="InterPro" id="IPR044749">
    <property type="entry name" value="FANCM_DEXDc"/>
</dbReference>
<dbReference type="InterPro" id="IPR006935">
    <property type="entry name" value="Helicase/UvrB_N"/>
</dbReference>
<dbReference type="InterPro" id="IPR014001">
    <property type="entry name" value="Helicase_ATP-bd"/>
</dbReference>
<dbReference type="InterPro" id="IPR001650">
    <property type="entry name" value="Helicase_C-like"/>
</dbReference>
<dbReference type="InterPro" id="IPR027417">
    <property type="entry name" value="P-loop_NTPase"/>
</dbReference>
<dbReference type="PANTHER" id="PTHR14025">
    <property type="entry name" value="FANCONI ANEMIA GROUP M FANCM FAMILY MEMBER"/>
    <property type="match status" value="1"/>
</dbReference>
<dbReference type="PANTHER" id="PTHR14025:SF20">
    <property type="entry name" value="FANCONI ANEMIA GROUP M PROTEIN"/>
    <property type="match status" value="1"/>
</dbReference>
<dbReference type="Pfam" id="PF00271">
    <property type="entry name" value="Helicase_C"/>
    <property type="match status" value="1"/>
</dbReference>
<dbReference type="Pfam" id="PF04851">
    <property type="entry name" value="ResIII"/>
    <property type="match status" value="1"/>
</dbReference>
<dbReference type="SMART" id="SM00487">
    <property type="entry name" value="DEXDc"/>
    <property type="match status" value="1"/>
</dbReference>
<dbReference type="SMART" id="SM00490">
    <property type="entry name" value="HELICc"/>
    <property type="match status" value="1"/>
</dbReference>
<dbReference type="SUPFAM" id="SSF52540">
    <property type="entry name" value="P-loop containing nucleoside triphosphate hydrolases"/>
    <property type="match status" value="1"/>
</dbReference>
<dbReference type="PROSITE" id="PS51192">
    <property type="entry name" value="HELICASE_ATP_BIND_1"/>
    <property type="match status" value="1"/>
</dbReference>
<dbReference type="PROSITE" id="PS51194">
    <property type="entry name" value="HELICASE_CTER"/>
    <property type="match status" value="1"/>
</dbReference>
<feature type="chain" id="PRO_0000333364" description="ATP-dependent DNA helicase mph1">
    <location>
        <begin position="1"/>
        <end position="1101"/>
    </location>
</feature>
<feature type="domain" description="Helicase ATP-binding" evidence="3">
    <location>
        <begin position="296"/>
        <end position="464"/>
    </location>
</feature>
<feature type="domain" description="Helicase C-terminal" evidence="4">
    <location>
        <begin position="634"/>
        <end position="808"/>
    </location>
</feature>
<feature type="region of interest" description="Disordered" evidence="5">
    <location>
        <begin position="22"/>
        <end position="59"/>
    </location>
</feature>
<feature type="region of interest" description="Disordered" evidence="5">
    <location>
        <begin position="95"/>
        <end position="138"/>
    </location>
</feature>
<feature type="region of interest" description="Disordered" evidence="5">
    <location>
        <begin position="154"/>
        <end position="231"/>
    </location>
</feature>
<feature type="region of interest" description="Disordered" evidence="5">
    <location>
        <begin position="250"/>
        <end position="270"/>
    </location>
</feature>
<feature type="region of interest" description="Disordered" evidence="5">
    <location>
        <begin position="824"/>
        <end position="890"/>
    </location>
</feature>
<feature type="region of interest" description="Disordered" evidence="5">
    <location>
        <begin position="991"/>
        <end position="1067"/>
    </location>
</feature>
<feature type="short sequence motif" description="DEAH box" evidence="3">
    <location>
        <begin position="412"/>
        <end position="415"/>
    </location>
</feature>
<feature type="compositionally biased region" description="Polar residues" evidence="5">
    <location>
        <begin position="24"/>
        <end position="48"/>
    </location>
</feature>
<feature type="compositionally biased region" description="Low complexity" evidence="5">
    <location>
        <begin position="170"/>
        <end position="190"/>
    </location>
</feature>
<feature type="compositionally biased region" description="Acidic residues" evidence="5">
    <location>
        <begin position="191"/>
        <end position="202"/>
    </location>
</feature>
<feature type="compositionally biased region" description="Polar residues" evidence="5">
    <location>
        <begin position="209"/>
        <end position="228"/>
    </location>
</feature>
<feature type="compositionally biased region" description="Basic residues" evidence="5">
    <location>
        <begin position="842"/>
        <end position="854"/>
    </location>
</feature>
<feature type="binding site" evidence="3">
    <location>
        <begin position="309"/>
        <end position="316"/>
    </location>
    <ligand>
        <name>ATP</name>
        <dbReference type="ChEBI" id="CHEBI:30616"/>
    </ligand>
</feature>